<protein>
    <recommendedName>
        <fullName>Ankyrin repeat family A protein 2</fullName>
    </recommendedName>
    <alternativeName>
        <fullName>RFXANK-like protein 2</fullName>
    </alternativeName>
</protein>
<comment type="function">
    <text evidence="1 5">May regulate the interaction between the 3M complex and the histone deacetylases HDAC4 and HDAC5 (PubMed:25752541). May also regulate LRP2/megalin (By similarity).</text>
</comment>
<comment type="subunit">
    <text evidence="2 3 4 5">Interacts (via ANK repeats) with CCDC8 (via PxLPxI/L motif); mediates the interaction with the 3M complex which is composed of CCDC8, CUL7 and OBSL1 (PubMed:25752541). Interacts (via ANK repeats) with HDAC4 (via PxLPxI/L motif) (PubMed:22649097). Interacts (via ANK repeats) with HDAC5 (via PxLPxI/L motif) (PubMed:22649097). Interacts (via ANK repeats) with LRP2/megalin (via PxLPxI/L motif) (PubMed:22649097). Interacts (via ANK repeats) with RFX7 (via PxLPxI/L motif) (PubMed:25752541). Interacts with AHRR (By similarity). Interacts with NEK6 (PubMed:20873783).</text>
</comment>
<comment type="interaction">
    <interactant intactId="EBI-10215533">
        <id>Q9H9E1</id>
    </interactant>
    <interactant intactId="EBI-5236005">
        <id>Q9H0W5</id>
        <label>CCDC8</label>
    </interactant>
    <organismsDiffer>false</organismsDiffer>
    <experiments>4</experiments>
</comment>
<comment type="interaction">
    <interactant intactId="EBI-10215533">
        <id>Q9H9E1</id>
    </interactant>
    <interactant intactId="EBI-308629">
        <id>P56524</id>
        <label>HDAC4</label>
    </interactant>
    <organismsDiffer>false</organismsDiffer>
    <experiments>3</experiments>
</comment>
<comment type="interaction">
    <interactant intactId="EBI-10215533">
        <id>Q9H9E1</id>
    </interactant>
    <interactant intactId="EBI-715576">
        <id>Q9UQL6</id>
        <label>HDAC5</label>
    </interactant>
    <organismsDiffer>false</organismsDiffer>
    <experiments>2</experiments>
</comment>
<comment type="interaction">
    <interactant intactId="EBI-10215533">
        <id>Q9H9E1</id>
    </interactant>
    <interactant intactId="EBI-1222187">
        <id>Q2KHR2</id>
        <label>RFX7</label>
    </interactant>
    <organismsDiffer>false</organismsDiffer>
    <experiments>2</experiments>
</comment>
<comment type="interaction">
    <interactant intactId="EBI-10215533">
        <id>Q9H9E1</id>
    </interactant>
    <interactant intactId="EBI-11986417">
        <id>Q9UPU9-3</id>
        <label>SAMD4A</label>
    </interactant>
    <organismsDiffer>false</organismsDiffer>
    <experiments>3</experiments>
</comment>
<comment type="interaction">
    <interactant intactId="EBI-10215533">
        <id>Q9H9E1</id>
    </interactant>
    <interactant intactId="EBI-9053916">
        <id>Q63HK5</id>
        <label>TSHZ3</label>
    </interactant>
    <organismsDiffer>false</organismsDiffer>
    <experiments>3</experiments>
</comment>
<comment type="subcellular location">
    <subcellularLocation>
        <location evidence="2">Cytoplasm</location>
        <location evidence="2">Cytoskeleton</location>
    </subcellularLocation>
    <subcellularLocation>
        <location evidence="2">Membrane</location>
        <topology evidence="2">Peripheral membrane protein</topology>
    </subcellularLocation>
</comment>
<comment type="domain">
    <text evidence="4 5">The ankyrin repeats, mainly ANK 2, ANK 3 and ANK 4, mediate interaction with a wide array of PxLPxI/L motif-containing proteins including HDAC4 and LRP2. The PxLPxI/L motif of interactors can contain a Ser or a Thr residue in position 2, which phosphorylation prevents the interaction with ANKRA2.</text>
</comment>
<organism>
    <name type="scientific">Homo sapiens</name>
    <name type="common">Human</name>
    <dbReference type="NCBI Taxonomy" id="9606"/>
    <lineage>
        <taxon>Eukaryota</taxon>
        <taxon>Metazoa</taxon>
        <taxon>Chordata</taxon>
        <taxon>Craniata</taxon>
        <taxon>Vertebrata</taxon>
        <taxon>Euteleostomi</taxon>
        <taxon>Mammalia</taxon>
        <taxon>Eutheria</taxon>
        <taxon>Euarchontoglires</taxon>
        <taxon>Primates</taxon>
        <taxon>Haplorrhini</taxon>
        <taxon>Catarrhini</taxon>
        <taxon>Hominidae</taxon>
        <taxon>Homo</taxon>
    </lineage>
</organism>
<name>ANRA2_HUMAN</name>
<keyword id="KW-0002">3D-structure</keyword>
<keyword id="KW-0040">ANK repeat</keyword>
<keyword id="KW-0963">Cytoplasm</keyword>
<keyword id="KW-0206">Cytoskeleton</keyword>
<keyword id="KW-0472">Membrane</keyword>
<keyword id="KW-1267">Proteomics identification</keyword>
<keyword id="KW-1185">Reference proteome</keyword>
<keyword id="KW-0677">Repeat</keyword>
<feature type="chain" id="PRO_0000066895" description="Ankyrin repeat family A protein 2">
    <location>
        <begin position="1"/>
        <end position="313"/>
    </location>
</feature>
<feature type="repeat" description="ANK 1">
    <location>
        <begin position="148"/>
        <end position="180"/>
    </location>
</feature>
<feature type="repeat" description="ANK 2">
    <location>
        <begin position="181"/>
        <end position="213"/>
    </location>
</feature>
<feature type="repeat" description="ANK 3">
    <location>
        <begin position="214"/>
        <end position="246"/>
    </location>
</feature>
<feature type="repeat" description="ANK 4">
    <location>
        <begin position="247"/>
        <end position="279"/>
    </location>
</feature>
<feature type="repeat" description="ANK 5">
    <location>
        <begin position="280"/>
        <end position="313"/>
    </location>
</feature>
<feature type="mutagenesis site" description="No effect on interaction with CCDC8." evidence="5">
    <original>K</original>
    <variation>R</variation>
    <location>
        <position position="31"/>
    </location>
</feature>
<feature type="mutagenesis site" description="Loss of interaction with CCDC8. Decreased affinity for HDAC4." evidence="4 5">
    <original>W</original>
    <variation>A</variation>
    <location>
        <position position="188"/>
    </location>
</feature>
<feature type="mutagenesis site" description="Decreased affinity for HDAC4." evidence="4">
    <original>Y</original>
    <variation>A</variation>
    <location>
        <position position="254"/>
    </location>
</feature>
<feature type="helix" evidence="8">
    <location>
        <begin position="144"/>
        <end position="147"/>
    </location>
</feature>
<feature type="helix" evidence="6">
    <location>
        <begin position="148"/>
        <end position="150"/>
    </location>
</feature>
<feature type="helix" evidence="7">
    <location>
        <begin position="153"/>
        <end position="158"/>
    </location>
</feature>
<feature type="helix" evidence="7">
    <location>
        <begin position="162"/>
        <end position="171"/>
    </location>
</feature>
<feature type="helix" evidence="7">
    <location>
        <begin position="185"/>
        <end position="191"/>
    </location>
</feature>
<feature type="helix" evidence="7">
    <location>
        <begin position="195"/>
        <end position="203"/>
    </location>
</feature>
<feature type="helix" evidence="7">
    <location>
        <begin position="218"/>
        <end position="225"/>
    </location>
</feature>
<feature type="helix" evidence="7">
    <location>
        <begin position="228"/>
        <end position="237"/>
    </location>
</feature>
<feature type="helix" evidence="7">
    <location>
        <begin position="251"/>
        <end position="257"/>
    </location>
</feature>
<feature type="helix" evidence="7">
    <location>
        <begin position="261"/>
        <end position="269"/>
    </location>
</feature>
<feature type="helix" evidence="7">
    <location>
        <begin position="284"/>
        <end position="291"/>
    </location>
</feature>
<feature type="helix" evidence="7">
    <location>
        <begin position="294"/>
        <end position="307"/>
    </location>
</feature>
<proteinExistence type="evidence at protein level"/>
<dbReference type="EMBL" id="AF314032">
    <property type="protein sequence ID" value="AAK01621.1"/>
    <property type="molecule type" value="mRNA"/>
</dbReference>
<dbReference type="EMBL" id="AK022876">
    <property type="protein sequence ID" value="BAB14288.1"/>
    <property type="molecule type" value="mRNA"/>
</dbReference>
<dbReference type="EMBL" id="AF251051">
    <property type="protein sequence ID" value="AAK34941.1"/>
    <property type="molecule type" value="mRNA"/>
</dbReference>
<dbReference type="EMBL" id="BC012917">
    <property type="protein sequence ID" value="AAH12917.1"/>
    <property type="molecule type" value="mRNA"/>
</dbReference>
<dbReference type="CCDS" id="CCDS4020.1"/>
<dbReference type="RefSeq" id="NP_075526.1">
    <property type="nucleotide sequence ID" value="NM_023039.5"/>
</dbReference>
<dbReference type="PDB" id="3SO8">
    <property type="method" value="X-ray"/>
    <property type="resolution" value="1.90 A"/>
    <property type="chains" value="A=149-310"/>
</dbReference>
<dbReference type="PDB" id="3V2O">
    <property type="method" value="X-ray"/>
    <property type="resolution" value="1.89 A"/>
    <property type="chains" value="A=148-313"/>
</dbReference>
<dbReference type="PDB" id="3V2X">
    <property type="method" value="X-ray"/>
    <property type="resolution" value="1.85 A"/>
    <property type="chains" value="A=148-313"/>
</dbReference>
<dbReference type="PDB" id="3V31">
    <property type="method" value="X-ray"/>
    <property type="resolution" value="1.57 A"/>
    <property type="chains" value="A=148-313"/>
</dbReference>
<dbReference type="PDB" id="4LG6">
    <property type="method" value="X-ray"/>
    <property type="resolution" value="1.80 A"/>
    <property type="chains" value="A=142-313"/>
</dbReference>
<dbReference type="PDB" id="4QQI">
    <property type="method" value="X-ray"/>
    <property type="resolution" value="2.03 A"/>
    <property type="chains" value="A=142-313"/>
</dbReference>
<dbReference type="PDB" id="8CXG">
    <property type="method" value="EM"/>
    <property type="resolution" value="3.20 A"/>
    <property type="chains" value="A/B/C=1-135"/>
</dbReference>
<dbReference type="PDB" id="8CXH">
    <property type="method" value="EM"/>
    <property type="resolution" value="3.20 A"/>
    <property type="chains" value="A/B/C=1-135"/>
</dbReference>
<dbReference type="PDB" id="8CXI">
    <property type="method" value="EM"/>
    <property type="resolution" value="3.40 A"/>
    <property type="chains" value="A/B/C=1-135"/>
</dbReference>
<dbReference type="PDBsum" id="3SO8"/>
<dbReference type="PDBsum" id="3V2O"/>
<dbReference type="PDBsum" id="3V2X"/>
<dbReference type="PDBsum" id="3V31"/>
<dbReference type="PDBsum" id="4LG6"/>
<dbReference type="PDBsum" id="4QQI"/>
<dbReference type="PDBsum" id="8CXG"/>
<dbReference type="PDBsum" id="8CXH"/>
<dbReference type="PDBsum" id="8CXI"/>
<dbReference type="SMR" id="Q9H9E1"/>
<dbReference type="BioGRID" id="121758">
    <property type="interactions" value="34"/>
</dbReference>
<dbReference type="CORUM" id="Q9H9E1"/>
<dbReference type="ELM" id="Q9H9E1"/>
<dbReference type="FunCoup" id="Q9H9E1">
    <property type="interactions" value="2836"/>
</dbReference>
<dbReference type="IntAct" id="Q9H9E1">
    <property type="interactions" value="30"/>
</dbReference>
<dbReference type="STRING" id="9606.ENSP00000296785"/>
<dbReference type="GlyGen" id="Q9H9E1">
    <property type="glycosylation" value="1 site, 1 O-linked glycan (1 site)"/>
</dbReference>
<dbReference type="iPTMnet" id="Q9H9E1"/>
<dbReference type="PhosphoSitePlus" id="Q9H9E1"/>
<dbReference type="BioMuta" id="ANKRA2"/>
<dbReference type="DMDM" id="27734215"/>
<dbReference type="jPOST" id="Q9H9E1"/>
<dbReference type="MassIVE" id="Q9H9E1"/>
<dbReference type="PaxDb" id="9606-ENSP00000296785"/>
<dbReference type="PeptideAtlas" id="Q9H9E1"/>
<dbReference type="ProteomicsDB" id="81315"/>
<dbReference type="Antibodypedia" id="24269">
    <property type="antibodies" value="187 antibodies from 23 providers"/>
</dbReference>
<dbReference type="DNASU" id="57763"/>
<dbReference type="Ensembl" id="ENST00000296785.8">
    <property type="protein sequence ID" value="ENSP00000296785.3"/>
    <property type="gene ID" value="ENSG00000164331.10"/>
</dbReference>
<dbReference type="GeneID" id="57763"/>
<dbReference type="KEGG" id="hsa:57763"/>
<dbReference type="MANE-Select" id="ENST00000296785.8">
    <property type="protein sequence ID" value="ENSP00000296785.3"/>
    <property type="RefSeq nucleotide sequence ID" value="NM_023039.5"/>
    <property type="RefSeq protein sequence ID" value="NP_075526.1"/>
</dbReference>
<dbReference type="UCSC" id="uc003kcu.3">
    <property type="organism name" value="human"/>
</dbReference>
<dbReference type="AGR" id="HGNC:13208"/>
<dbReference type="CTD" id="57763"/>
<dbReference type="DisGeNET" id="57763"/>
<dbReference type="GeneCards" id="ANKRA2"/>
<dbReference type="HGNC" id="HGNC:13208">
    <property type="gene designation" value="ANKRA2"/>
</dbReference>
<dbReference type="HPA" id="ENSG00000164331">
    <property type="expression patterns" value="Low tissue specificity"/>
</dbReference>
<dbReference type="MIM" id="605787">
    <property type="type" value="gene"/>
</dbReference>
<dbReference type="neXtProt" id="NX_Q9H9E1"/>
<dbReference type="OpenTargets" id="ENSG00000164331"/>
<dbReference type="PharmGKB" id="PA24803"/>
<dbReference type="VEuPathDB" id="HostDB:ENSG00000164331"/>
<dbReference type="eggNOG" id="KOG0502">
    <property type="taxonomic scope" value="Eukaryota"/>
</dbReference>
<dbReference type="GeneTree" id="ENSGT00940000157156"/>
<dbReference type="HOGENOM" id="CLU_078123_0_0_1"/>
<dbReference type="InParanoid" id="Q9H9E1"/>
<dbReference type="OMA" id="FKAECSI"/>
<dbReference type="OrthoDB" id="10251692at2759"/>
<dbReference type="PAN-GO" id="Q9H9E1">
    <property type="GO annotations" value="2 GO annotations based on evolutionary models"/>
</dbReference>
<dbReference type="PhylomeDB" id="Q9H9E1"/>
<dbReference type="TreeFam" id="TF333112"/>
<dbReference type="PathwayCommons" id="Q9H9E1"/>
<dbReference type="SignaLink" id="Q9H9E1"/>
<dbReference type="BioGRID-ORCS" id="57763">
    <property type="hits" value="14 hits in 1153 CRISPR screens"/>
</dbReference>
<dbReference type="ChiTaRS" id="ANKRA2">
    <property type="organism name" value="human"/>
</dbReference>
<dbReference type="EvolutionaryTrace" id="Q9H9E1"/>
<dbReference type="GenomeRNAi" id="57763"/>
<dbReference type="Pharos" id="Q9H9E1">
    <property type="development level" value="Tbio"/>
</dbReference>
<dbReference type="PRO" id="PR:Q9H9E1"/>
<dbReference type="Proteomes" id="UP000005640">
    <property type="component" value="Chromosome 5"/>
</dbReference>
<dbReference type="RNAct" id="Q9H9E1">
    <property type="molecule type" value="protein"/>
</dbReference>
<dbReference type="Bgee" id="ENSG00000164331">
    <property type="expression patterns" value="Expressed in left ovary and 194 other cell types or tissues"/>
</dbReference>
<dbReference type="ExpressionAtlas" id="Q9H9E1">
    <property type="expression patterns" value="baseline and differential"/>
</dbReference>
<dbReference type="GO" id="GO:0005856">
    <property type="term" value="C:cytoskeleton"/>
    <property type="evidence" value="ECO:0007669"/>
    <property type="project" value="UniProtKB-SubCell"/>
</dbReference>
<dbReference type="GO" id="GO:0005829">
    <property type="term" value="C:cytosol"/>
    <property type="evidence" value="ECO:0000314"/>
    <property type="project" value="UniProtKB"/>
</dbReference>
<dbReference type="GO" id="GO:0016020">
    <property type="term" value="C:membrane"/>
    <property type="evidence" value="ECO:0000314"/>
    <property type="project" value="UniProtKB"/>
</dbReference>
<dbReference type="GO" id="GO:0005634">
    <property type="term" value="C:nucleus"/>
    <property type="evidence" value="ECO:0000318"/>
    <property type="project" value="GO_Central"/>
</dbReference>
<dbReference type="GO" id="GO:0032991">
    <property type="term" value="C:protein-containing complex"/>
    <property type="evidence" value="ECO:0000314"/>
    <property type="project" value="UniProtKB"/>
</dbReference>
<dbReference type="GO" id="GO:0042826">
    <property type="term" value="F:histone deacetylase binding"/>
    <property type="evidence" value="ECO:0000314"/>
    <property type="project" value="UniProtKB"/>
</dbReference>
<dbReference type="GO" id="GO:0050750">
    <property type="term" value="F:low-density lipoprotein particle receptor binding"/>
    <property type="evidence" value="ECO:0000353"/>
    <property type="project" value="UniProtKB"/>
</dbReference>
<dbReference type="GO" id="GO:0019901">
    <property type="term" value="F:protein kinase binding"/>
    <property type="evidence" value="ECO:0000353"/>
    <property type="project" value="UniProtKB"/>
</dbReference>
<dbReference type="GO" id="GO:0031625">
    <property type="term" value="F:ubiquitin protein ligase binding"/>
    <property type="evidence" value="ECO:0000314"/>
    <property type="project" value="UniProtKB"/>
</dbReference>
<dbReference type="GO" id="GO:0010468">
    <property type="term" value="P:regulation of gene expression"/>
    <property type="evidence" value="ECO:0000318"/>
    <property type="project" value="GO_Central"/>
</dbReference>
<dbReference type="GO" id="GO:0043254">
    <property type="term" value="P:regulation of protein-containing complex assembly"/>
    <property type="evidence" value="ECO:0000314"/>
    <property type="project" value="UniProtKB"/>
</dbReference>
<dbReference type="FunFam" id="1.25.40.20:FF:000031">
    <property type="entry name" value="Ankyrin repeat, family A (RFXANK-like), 2"/>
    <property type="match status" value="1"/>
</dbReference>
<dbReference type="Gene3D" id="1.25.40.20">
    <property type="entry name" value="Ankyrin repeat-containing domain"/>
    <property type="match status" value="1"/>
</dbReference>
<dbReference type="InterPro" id="IPR002110">
    <property type="entry name" value="Ankyrin_rpt"/>
</dbReference>
<dbReference type="InterPro" id="IPR036770">
    <property type="entry name" value="Ankyrin_rpt-contain_sf"/>
</dbReference>
<dbReference type="PANTHER" id="PTHR24124">
    <property type="entry name" value="ANKYRIN REPEAT FAMILY A"/>
    <property type="match status" value="1"/>
</dbReference>
<dbReference type="PANTHER" id="PTHR24124:SF3">
    <property type="entry name" value="ANKYRIN REPEAT FAMILY A PROTEIN 2"/>
    <property type="match status" value="1"/>
</dbReference>
<dbReference type="Pfam" id="PF00023">
    <property type="entry name" value="Ank"/>
    <property type="match status" value="1"/>
</dbReference>
<dbReference type="Pfam" id="PF12796">
    <property type="entry name" value="Ank_2"/>
    <property type="match status" value="1"/>
</dbReference>
<dbReference type="PRINTS" id="PR01415">
    <property type="entry name" value="ANKYRIN"/>
</dbReference>
<dbReference type="SMART" id="SM00248">
    <property type="entry name" value="ANK"/>
    <property type="match status" value="3"/>
</dbReference>
<dbReference type="SUPFAM" id="SSF48403">
    <property type="entry name" value="Ankyrin repeat"/>
    <property type="match status" value="1"/>
</dbReference>
<dbReference type="PROSITE" id="PS50297">
    <property type="entry name" value="ANK_REP_REGION"/>
    <property type="match status" value="1"/>
</dbReference>
<dbReference type="PROSITE" id="PS50088">
    <property type="entry name" value="ANK_REPEAT"/>
    <property type="match status" value="3"/>
</dbReference>
<gene>
    <name type="primary">ANKRA2</name>
    <name type="synonym">ANKRA</name>
</gene>
<sequence length="313" mass="34272">MDTSTNLDIGAQLIVEECPSTYSLTGMPDIKIEHPLDPNSEEGSAQGVAMGMKFILPNRFDMNVCSRFVKSLNEEDSKNIQDQVNSDLEVASVLFKAECNIHTSPSPGIQVRHVYTPSTTKHFSPIKQSTTLTNKHRGNEVSTTPLLANSLSVHQLAAQGEMLYLATRIEQENVINHTDEEGFTPLMWAAAHGQIAVVEFLLQNGADPQLLGKGRESALSLACSKGYTDIVKMLLDCGVDVNEYDWNGGTPLLYAVHGNHVKCVKMLLESGADPTIETDSGYNSMDLAVALGYRSVQQVIESHLLKLLQNIKE</sequence>
<evidence type="ECO:0000250" key="1">
    <source>
        <dbReference type="UniProtKB" id="A2ARV4"/>
    </source>
</evidence>
<evidence type="ECO:0000250" key="2">
    <source>
        <dbReference type="UniProtKB" id="Q99PE2"/>
    </source>
</evidence>
<evidence type="ECO:0000269" key="3">
    <source>
    </source>
</evidence>
<evidence type="ECO:0000269" key="4">
    <source>
    </source>
</evidence>
<evidence type="ECO:0000269" key="5">
    <source>
    </source>
</evidence>
<evidence type="ECO:0007829" key="6">
    <source>
        <dbReference type="PDB" id="3V2X"/>
    </source>
</evidence>
<evidence type="ECO:0007829" key="7">
    <source>
        <dbReference type="PDB" id="3V31"/>
    </source>
</evidence>
<evidence type="ECO:0007829" key="8">
    <source>
        <dbReference type="PDB" id="4QQI"/>
    </source>
</evidence>
<reference key="1">
    <citation type="journal article" date="2000" name="J. Am. Soc. Nephrol.">
        <title>Characterization of ANKRA, a novel ankyrin repeat protein that interacts with the cytoplasmic domain of megalin.</title>
        <authorList>
            <person name="Rader K."/>
            <person name="Orlando R.A."/>
            <person name="Lou X."/>
            <person name="Farquhar M.G."/>
        </authorList>
    </citation>
    <scope>NUCLEOTIDE SEQUENCE [MRNA]</scope>
</reference>
<reference key="2">
    <citation type="journal article" date="2004" name="Nat. Genet.">
        <title>Complete sequencing and characterization of 21,243 full-length human cDNAs.</title>
        <authorList>
            <person name="Ota T."/>
            <person name="Suzuki Y."/>
            <person name="Nishikawa T."/>
            <person name="Otsuki T."/>
            <person name="Sugiyama T."/>
            <person name="Irie R."/>
            <person name="Wakamatsu A."/>
            <person name="Hayashi K."/>
            <person name="Sato H."/>
            <person name="Nagai K."/>
            <person name="Kimura K."/>
            <person name="Makita H."/>
            <person name="Sekine M."/>
            <person name="Obayashi M."/>
            <person name="Nishi T."/>
            <person name="Shibahara T."/>
            <person name="Tanaka T."/>
            <person name="Ishii S."/>
            <person name="Yamamoto J."/>
            <person name="Saito K."/>
            <person name="Kawai Y."/>
            <person name="Isono Y."/>
            <person name="Nakamura Y."/>
            <person name="Nagahari K."/>
            <person name="Murakami K."/>
            <person name="Yasuda T."/>
            <person name="Iwayanagi T."/>
            <person name="Wagatsuma M."/>
            <person name="Shiratori A."/>
            <person name="Sudo H."/>
            <person name="Hosoiri T."/>
            <person name="Kaku Y."/>
            <person name="Kodaira H."/>
            <person name="Kondo H."/>
            <person name="Sugawara M."/>
            <person name="Takahashi M."/>
            <person name="Kanda K."/>
            <person name="Yokoi T."/>
            <person name="Furuya T."/>
            <person name="Kikkawa E."/>
            <person name="Omura Y."/>
            <person name="Abe K."/>
            <person name="Kamihara K."/>
            <person name="Katsuta N."/>
            <person name="Sato K."/>
            <person name="Tanikawa M."/>
            <person name="Yamazaki M."/>
            <person name="Ninomiya K."/>
            <person name="Ishibashi T."/>
            <person name="Yamashita H."/>
            <person name="Murakawa K."/>
            <person name="Fujimori K."/>
            <person name="Tanai H."/>
            <person name="Kimata M."/>
            <person name="Watanabe M."/>
            <person name="Hiraoka S."/>
            <person name="Chiba Y."/>
            <person name="Ishida S."/>
            <person name="Ono Y."/>
            <person name="Takiguchi S."/>
            <person name="Watanabe S."/>
            <person name="Yosida M."/>
            <person name="Hotuta T."/>
            <person name="Kusano J."/>
            <person name="Kanehori K."/>
            <person name="Takahashi-Fujii A."/>
            <person name="Hara H."/>
            <person name="Tanase T.-O."/>
            <person name="Nomura Y."/>
            <person name="Togiya S."/>
            <person name="Komai F."/>
            <person name="Hara R."/>
            <person name="Takeuchi K."/>
            <person name="Arita M."/>
            <person name="Imose N."/>
            <person name="Musashino K."/>
            <person name="Yuuki H."/>
            <person name="Oshima A."/>
            <person name="Sasaki N."/>
            <person name="Aotsuka S."/>
            <person name="Yoshikawa Y."/>
            <person name="Matsunawa H."/>
            <person name="Ichihara T."/>
            <person name="Shiohata N."/>
            <person name="Sano S."/>
            <person name="Moriya S."/>
            <person name="Momiyama H."/>
            <person name="Satoh N."/>
            <person name="Takami S."/>
            <person name="Terashima Y."/>
            <person name="Suzuki O."/>
            <person name="Nakagawa S."/>
            <person name="Senoh A."/>
            <person name="Mizoguchi H."/>
            <person name="Goto Y."/>
            <person name="Shimizu F."/>
            <person name="Wakebe H."/>
            <person name="Hishigaki H."/>
            <person name="Watanabe T."/>
            <person name="Sugiyama A."/>
            <person name="Takemoto M."/>
            <person name="Kawakami B."/>
            <person name="Yamazaki M."/>
            <person name="Watanabe K."/>
            <person name="Kumagai A."/>
            <person name="Itakura S."/>
            <person name="Fukuzumi Y."/>
            <person name="Fujimori Y."/>
            <person name="Komiyama M."/>
            <person name="Tashiro H."/>
            <person name="Tanigami A."/>
            <person name="Fujiwara T."/>
            <person name="Ono T."/>
            <person name="Yamada K."/>
            <person name="Fujii Y."/>
            <person name="Ozaki K."/>
            <person name="Hirao M."/>
            <person name="Ohmori Y."/>
            <person name="Kawabata A."/>
            <person name="Hikiji T."/>
            <person name="Kobatake N."/>
            <person name="Inagaki H."/>
            <person name="Ikema Y."/>
            <person name="Okamoto S."/>
            <person name="Okitani R."/>
            <person name="Kawakami T."/>
            <person name="Noguchi S."/>
            <person name="Itoh T."/>
            <person name="Shigeta K."/>
            <person name="Senba T."/>
            <person name="Matsumura K."/>
            <person name="Nakajima Y."/>
            <person name="Mizuno T."/>
            <person name="Morinaga M."/>
            <person name="Sasaki M."/>
            <person name="Togashi T."/>
            <person name="Oyama M."/>
            <person name="Hata H."/>
            <person name="Watanabe M."/>
            <person name="Komatsu T."/>
            <person name="Mizushima-Sugano J."/>
            <person name="Satoh T."/>
            <person name="Shirai Y."/>
            <person name="Takahashi Y."/>
            <person name="Nakagawa K."/>
            <person name="Okumura K."/>
            <person name="Nagase T."/>
            <person name="Nomura N."/>
            <person name="Kikuchi H."/>
            <person name="Masuho Y."/>
            <person name="Yamashita R."/>
            <person name="Nakai K."/>
            <person name="Yada T."/>
            <person name="Nakamura Y."/>
            <person name="Ohara O."/>
            <person name="Isogai T."/>
            <person name="Sugano S."/>
        </authorList>
    </citation>
    <scope>NUCLEOTIDE SEQUENCE [LARGE SCALE MRNA]</scope>
</reference>
<reference key="3">
    <citation type="submission" date="2000-03" db="EMBL/GenBank/DDBJ databases">
        <authorList>
            <person name="Mao Y."/>
            <person name="Xie Y."/>
            <person name="Zhou Z."/>
            <person name="Zhao W."/>
            <person name="Zhao S."/>
            <person name="Wang W."/>
            <person name="Huang Y."/>
            <person name="Wang S."/>
            <person name="Tang R."/>
            <person name="Chen X."/>
            <person name="Wu C."/>
        </authorList>
    </citation>
    <scope>NUCLEOTIDE SEQUENCE [MRNA]</scope>
</reference>
<reference key="4">
    <citation type="journal article" date="2004" name="Genome Res.">
        <title>The status, quality, and expansion of the NIH full-length cDNA project: the Mammalian Gene Collection (MGC).</title>
        <authorList>
            <consortium name="The MGC Project Team"/>
        </authorList>
    </citation>
    <scope>NUCLEOTIDE SEQUENCE [LARGE SCALE MRNA]</scope>
    <source>
        <tissue>Kidney</tissue>
    </source>
</reference>
<reference key="5">
    <citation type="journal article" date="2010" name="J. Proteome Res.">
        <title>Characterization of hNek6 interactome reveals an important role for its short N-terminal domain and colocalization with proteins at the centrosome.</title>
        <authorList>
            <person name="Vaz Meirelles G."/>
            <person name="Ferreira Lanza D.C."/>
            <person name="da Silva J.C."/>
            <person name="Santana Bernachi J."/>
            <person name="Paes Leme A.F."/>
            <person name="Kobarg J."/>
        </authorList>
    </citation>
    <scope>INTERACTION WITH NEK6</scope>
</reference>
<reference key="6">
    <citation type="journal article" date="2012" name="Sci. Signal.">
        <title>Sequence-specific recognition of a PxLPxI/L motif by an ankyrin repeat tumbler lock.</title>
        <authorList>
            <person name="Xu C."/>
            <person name="Jin J."/>
            <person name="Bian C."/>
            <person name="Lam R."/>
            <person name="Tian R."/>
            <person name="Weist R."/>
            <person name="You L."/>
            <person name="Nie J."/>
            <person name="Bochkarev A."/>
            <person name="Tempel W."/>
            <person name="Tan C.S."/>
            <person name="Wasney G.A."/>
            <person name="Vedadi M."/>
            <person name="Gish G.D."/>
            <person name="Arrowsmith C.H."/>
            <person name="Pawson T."/>
            <person name="Yang X.J."/>
            <person name="Min J."/>
        </authorList>
    </citation>
    <scope>X-RAY CRYSTALLOGRAPHY (1.57 ANGSTROMS) OF 148-313 IN COMPLEX WITH HDAC4 AND LRP2 PEPTIDES</scope>
    <scope>DOMAIN ANK REPEATS</scope>
    <scope>INTERACTION WITH LRP2; HDAC4 AND HDAC5</scope>
    <scope>MUTAGENESIS OF TRP-188 AND TYR-254</scope>
</reference>
<reference key="7">
    <citation type="journal article" date="2015" name="Structure">
        <title>Ankyrin repeats of ANKRA2 recognize a PxLPxL motif on the 3M syndrome protein CCDC8.</title>
        <authorList>
            <person name="Nie J."/>
            <person name="Xu C."/>
            <person name="Jin J."/>
            <person name="Aka J.A."/>
            <person name="Tempel W."/>
            <person name="Nguyen V."/>
            <person name="You L."/>
            <person name="Weist R."/>
            <person name="Min J."/>
            <person name="Pawson T."/>
            <person name="Yang X.J."/>
        </authorList>
    </citation>
    <scope>X-RAY CRYSTALLOGRAPHY (1.80 ANGSTROMS) OF 142-313 IN COMPLEX WITH CCDC8</scope>
    <scope>X-RAY CRYSTALLOGRAPHY (2.03 ANGSTROMS) OF 142-313 IN COMPLEX WITH RFX7</scope>
    <scope>FUNCTION</scope>
    <scope>INTERACTION WITH RFX7 AND THE 3M COMPLEX</scope>
    <scope>DOMAIN</scope>
    <scope>MUTAGENESIS OF LYS-31 AND TRP-188</scope>
</reference>
<accession>Q9H9E1</accession>